<reference key="1">
    <citation type="journal article" date="2002" name="J. Biol. Chem.">
        <title>Molecular cloning and characterization of CAPER, a novel coactivator of activating protein-1 and estrogen receptors.</title>
        <authorList>
            <person name="Jung D.-J."/>
            <person name="Na S.-Y."/>
            <person name="Na D.S."/>
            <person name="Lee J.W."/>
        </authorList>
    </citation>
    <scope>NUCLEOTIDE SEQUENCE [MRNA] (ISOFORMS 1 AND 2)</scope>
    <scope>FUNCTION</scope>
    <scope>INTERACTION WITH NCOA6; ESR1; ESR2 AND JUN</scope>
    <source>
        <tissue>Liver</tissue>
    </source>
</reference>
<reference key="2">
    <citation type="journal article" date="2005" name="Science">
        <title>The transcriptional landscape of the mammalian genome.</title>
        <authorList>
            <person name="Carninci P."/>
            <person name="Kasukawa T."/>
            <person name="Katayama S."/>
            <person name="Gough J."/>
            <person name="Frith M.C."/>
            <person name="Maeda N."/>
            <person name="Oyama R."/>
            <person name="Ravasi T."/>
            <person name="Lenhard B."/>
            <person name="Wells C."/>
            <person name="Kodzius R."/>
            <person name="Shimokawa K."/>
            <person name="Bajic V.B."/>
            <person name="Brenner S.E."/>
            <person name="Batalov S."/>
            <person name="Forrest A.R."/>
            <person name="Zavolan M."/>
            <person name="Davis M.J."/>
            <person name="Wilming L.G."/>
            <person name="Aidinis V."/>
            <person name="Allen J.E."/>
            <person name="Ambesi-Impiombato A."/>
            <person name="Apweiler R."/>
            <person name="Aturaliya R.N."/>
            <person name="Bailey T.L."/>
            <person name="Bansal M."/>
            <person name="Baxter L."/>
            <person name="Beisel K.W."/>
            <person name="Bersano T."/>
            <person name="Bono H."/>
            <person name="Chalk A.M."/>
            <person name="Chiu K.P."/>
            <person name="Choudhary V."/>
            <person name="Christoffels A."/>
            <person name="Clutterbuck D.R."/>
            <person name="Crowe M.L."/>
            <person name="Dalla E."/>
            <person name="Dalrymple B.P."/>
            <person name="de Bono B."/>
            <person name="Della Gatta G."/>
            <person name="di Bernardo D."/>
            <person name="Down T."/>
            <person name="Engstrom P."/>
            <person name="Fagiolini M."/>
            <person name="Faulkner G."/>
            <person name="Fletcher C.F."/>
            <person name="Fukushima T."/>
            <person name="Furuno M."/>
            <person name="Futaki S."/>
            <person name="Gariboldi M."/>
            <person name="Georgii-Hemming P."/>
            <person name="Gingeras T.R."/>
            <person name="Gojobori T."/>
            <person name="Green R.E."/>
            <person name="Gustincich S."/>
            <person name="Harbers M."/>
            <person name="Hayashi Y."/>
            <person name="Hensch T.K."/>
            <person name="Hirokawa N."/>
            <person name="Hill D."/>
            <person name="Huminiecki L."/>
            <person name="Iacono M."/>
            <person name="Ikeo K."/>
            <person name="Iwama A."/>
            <person name="Ishikawa T."/>
            <person name="Jakt M."/>
            <person name="Kanapin A."/>
            <person name="Katoh M."/>
            <person name="Kawasawa Y."/>
            <person name="Kelso J."/>
            <person name="Kitamura H."/>
            <person name="Kitano H."/>
            <person name="Kollias G."/>
            <person name="Krishnan S.P."/>
            <person name="Kruger A."/>
            <person name="Kummerfeld S.K."/>
            <person name="Kurochkin I.V."/>
            <person name="Lareau L.F."/>
            <person name="Lazarevic D."/>
            <person name="Lipovich L."/>
            <person name="Liu J."/>
            <person name="Liuni S."/>
            <person name="McWilliam S."/>
            <person name="Madan Babu M."/>
            <person name="Madera M."/>
            <person name="Marchionni L."/>
            <person name="Matsuda H."/>
            <person name="Matsuzawa S."/>
            <person name="Miki H."/>
            <person name="Mignone F."/>
            <person name="Miyake S."/>
            <person name="Morris K."/>
            <person name="Mottagui-Tabar S."/>
            <person name="Mulder N."/>
            <person name="Nakano N."/>
            <person name="Nakauchi H."/>
            <person name="Ng P."/>
            <person name="Nilsson R."/>
            <person name="Nishiguchi S."/>
            <person name="Nishikawa S."/>
            <person name="Nori F."/>
            <person name="Ohara O."/>
            <person name="Okazaki Y."/>
            <person name="Orlando V."/>
            <person name="Pang K.C."/>
            <person name="Pavan W.J."/>
            <person name="Pavesi G."/>
            <person name="Pesole G."/>
            <person name="Petrovsky N."/>
            <person name="Piazza S."/>
            <person name="Reed J."/>
            <person name="Reid J.F."/>
            <person name="Ring B.Z."/>
            <person name="Ringwald M."/>
            <person name="Rost B."/>
            <person name="Ruan Y."/>
            <person name="Salzberg S.L."/>
            <person name="Sandelin A."/>
            <person name="Schneider C."/>
            <person name="Schoenbach C."/>
            <person name="Sekiguchi K."/>
            <person name="Semple C.A."/>
            <person name="Seno S."/>
            <person name="Sessa L."/>
            <person name="Sheng Y."/>
            <person name="Shibata Y."/>
            <person name="Shimada H."/>
            <person name="Shimada K."/>
            <person name="Silva D."/>
            <person name="Sinclair B."/>
            <person name="Sperling S."/>
            <person name="Stupka E."/>
            <person name="Sugiura K."/>
            <person name="Sultana R."/>
            <person name="Takenaka Y."/>
            <person name="Taki K."/>
            <person name="Tammoja K."/>
            <person name="Tan S.L."/>
            <person name="Tang S."/>
            <person name="Taylor M.S."/>
            <person name="Tegner J."/>
            <person name="Teichmann S.A."/>
            <person name="Ueda H.R."/>
            <person name="van Nimwegen E."/>
            <person name="Verardo R."/>
            <person name="Wei C.L."/>
            <person name="Yagi K."/>
            <person name="Yamanishi H."/>
            <person name="Zabarovsky E."/>
            <person name="Zhu S."/>
            <person name="Zimmer A."/>
            <person name="Hide W."/>
            <person name="Bult C."/>
            <person name="Grimmond S.M."/>
            <person name="Teasdale R.D."/>
            <person name="Liu E.T."/>
            <person name="Brusic V."/>
            <person name="Quackenbush J."/>
            <person name="Wahlestedt C."/>
            <person name="Mattick J.S."/>
            <person name="Hume D.A."/>
            <person name="Kai C."/>
            <person name="Sasaki D."/>
            <person name="Tomaru Y."/>
            <person name="Fukuda S."/>
            <person name="Kanamori-Katayama M."/>
            <person name="Suzuki M."/>
            <person name="Aoki J."/>
            <person name="Arakawa T."/>
            <person name="Iida J."/>
            <person name="Imamura K."/>
            <person name="Itoh M."/>
            <person name="Kato T."/>
            <person name="Kawaji H."/>
            <person name="Kawagashira N."/>
            <person name="Kawashima T."/>
            <person name="Kojima M."/>
            <person name="Kondo S."/>
            <person name="Konno H."/>
            <person name="Nakano K."/>
            <person name="Ninomiya N."/>
            <person name="Nishio T."/>
            <person name="Okada M."/>
            <person name="Plessy C."/>
            <person name="Shibata K."/>
            <person name="Shiraki T."/>
            <person name="Suzuki S."/>
            <person name="Tagami M."/>
            <person name="Waki K."/>
            <person name="Watahiki A."/>
            <person name="Okamura-Oho Y."/>
            <person name="Suzuki H."/>
            <person name="Kawai J."/>
            <person name="Hayashizaki Y."/>
        </authorList>
    </citation>
    <scope>NUCLEOTIDE SEQUENCE [LARGE SCALE MRNA]</scope>
</reference>
<reference key="3">
    <citation type="journal article" date="2009" name="PLoS Biol.">
        <title>Lineage-specific biology revealed by a finished genome assembly of the mouse.</title>
        <authorList>
            <person name="Church D.M."/>
            <person name="Goodstadt L."/>
            <person name="Hillier L.W."/>
            <person name="Zody M.C."/>
            <person name="Goldstein S."/>
            <person name="She X."/>
            <person name="Bult C.J."/>
            <person name="Agarwala R."/>
            <person name="Cherry J.L."/>
            <person name="DiCuccio M."/>
            <person name="Hlavina W."/>
            <person name="Kapustin Y."/>
            <person name="Meric P."/>
            <person name="Maglott D."/>
            <person name="Birtle Z."/>
            <person name="Marques A.C."/>
            <person name="Graves T."/>
            <person name="Zhou S."/>
            <person name="Teague B."/>
            <person name="Potamousis K."/>
            <person name="Churas C."/>
            <person name="Place M."/>
            <person name="Herschleb J."/>
            <person name="Runnheim R."/>
            <person name="Forrest D."/>
            <person name="Amos-Landgraf J."/>
            <person name="Schwartz D.C."/>
            <person name="Cheng Z."/>
            <person name="Lindblad-Toh K."/>
            <person name="Eichler E.E."/>
            <person name="Ponting C.P."/>
        </authorList>
    </citation>
    <scope>NUCLEOTIDE SEQUENCE [LARGE SCALE GENOMIC DNA]</scope>
    <source>
        <strain>C57BL/6J</strain>
    </source>
</reference>
<reference key="4">
    <citation type="submission" date="2005-07" db="EMBL/GenBank/DDBJ databases">
        <authorList>
            <person name="Mural R.J."/>
            <person name="Adams M.D."/>
            <person name="Myers E.W."/>
            <person name="Smith H.O."/>
            <person name="Venter J.C."/>
        </authorList>
    </citation>
    <scope>NUCLEOTIDE SEQUENCE [LARGE SCALE GENOMIC DNA]</scope>
</reference>
<reference key="5">
    <citation type="journal article" date="2004" name="Genome Res.">
        <title>The status, quality, and expansion of the NIH full-length cDNA project: the Mammalian Gene Collection (MGC).</title>
        <authorList>
            <consortium name="The MGC Project Team"/>
        </authorList>
    </citation>
    <scope>NUCLEOTIDE SEQUENCE [LARGE SCALE MRNA] (ISOFORMS 1 AND 3)</scope>
    <source>
        <strain>C57BL/6J</strain>
        <tissue>Brain</tissue>
        <tissue>Mammary fibroblast</tissue>
        <tissue>Retina</tissue>
    </source>
</reference>
<reference key="6">
    <citation type="journal article" date="2007" name="Proc. Natl. Acad. Sci. U.S.A.">
        <title>Large-scale phosphorylation analysis of mouse liver.</title>
        <authorList>
            <person name="Villen J."/>
            <person name="Beausoleil S.A."/>
            <person name="Gerber S.A."/>
            <person name="Gygi S.P."/>
        </authorList>
    </citation>
    <scope>PHOSPHORYLATION [LARGE SCALE ANALYSIS] AT SER-136</scope>
    <scope>IDENTIFICATION BY MASS SPECTROMETRY [LARGE SCALE ANALYSIS]</scope>
    <source>
        <tissue>Liver</tissue>
    </source>
</reference>
<reference key="7">
    <citation type="journal article" date="2008" name="J. Proteome Res.">
        <title>Specific phosphopeptide enrichment with immobilized titanium ion affinity chromatography adsorbent for phosphoproteome analysis.</title>
        <authorList>
            <person name="Zhou H."/>
            <person name="Ye M."/>
            <person name="Dong J."/>
            <person name="Han G."/>
            <person name="Jiang X."/>
            <person name="Wu R."/>
            <person name="Zou H."/>
        </authorList>
    </citation>
    <scope>PHOSPHORYLATION [LARGE SCALE ANALYSIS] AT SER-136</scope>
    <scope>IDENTIFICATION BY MASS SPECTROMETRY [LARGE SCALE ANALYSIS]</scope>
    <source>
        <tissue>Liver</tissue>
    </source>
</reference>
<reference key="8">
    <citation type="journal article" date="2009" name="Mol. Cell. Proteomics">
        <title>Large scale localization of protein phosphorylation by use of electron capture dissociation mass spectrometry.</title>
        <authorList>
            <person name="Sweet S.M."/>
            <person name="Bailey C.M."/>
            <person name="Cunningham D.L."/>
            <person name="Heath J.K."/>
            <person name="Cooper H.J."/>
        </authorList>
    </citation>
    <scope>PHOSPHORYLATION [LARGE SCALE ANALYSIS] AT SER-136</scope>
    <scope>IDENTIFICATION BY MASS SPECTROMETRY [LARGE SCALE ANALYSIS]</scope>
    <source>
        <tissue>Embryonic fibroblast</tissue>
    </source>
</reference>
<reference key="9">
    <citation type="journal article" date="2010" name="Cell">
        <title>A tissue-specific atlas of mouse protein phosphorylation and expression.</title>
        <authorList>
            <person name="Huttlin E.L."/>
            <person name="Jedrychowski M.P."/>
            <person name="Elias J.E."/>
            <person name="Goswami T."/>
            <person name="Rad R."/>
            <person name="Beausoleil S.A."/>
            <person name="Villen J."/>
            <person name="Haas W."/>
            <person name="Sowa M.E."/>
            <person name="Gygi S.P."/>
        </authorList>
    </citation>
    <scope>PHOSPHORYLATION [LARGE SCALE ANALYSIS] AT SER-117; SER-136; SER-334 AND SER-337</scope>
    <scope>IDENTIFICATION BY MASS SPECTROMETRY [LARGE SCALE ANALYSIS]</scope>
    <source>
        <tissue>Brain</tissue>
        <tissue>Brown adipose tissue</tissue>
        <tissue>Heart</tissue>
        <tissue>Kidney</tissue>
        <tissue>Liver</tissue>
        <tissue>Lung</tissue>
        <tissue>Pancreas</tissue>
        <tissue>Spleen</tissue>
        <tissue>Testis</tissue>
    </source>
</reference>
<reference key="10">
    <citation type="journal article" date="2016" name="Proc. Natl. Acad. Sci. U.S.A.">
        <title>Severe muscle wasting and denervation in mice lacking the RNA-binding protein ZFP106.</title>
        <authorList>
            <person name="Anderson D.M."/>
            <person name="Cannavino J."/>
            <person name="Li H."/>
            <person name="Anderson K.M."/>
            <person name="Nelson B.R."/>
            <person name="McAnally J."/>
            <person name="Bezprozvannaya S."/>
            <person name="Liu Y."/>
            <person name="Lin W."/>
            <person name="Liu N."/>
            <person name="Bassel-Duby R."/>
            <person name="Olson E.N."/>
        </authorList>
    </citation>
    <scope>INTERACTION WITH ZNF106</scope>
</reference>
<accession>Q8VH51</accession>
<accession>Q5RJI0</accession>
<accession>Q99KV0</accession>
<comment type="function">
    <text evidence="1 4">RNA-binding protein that acts as a pre-mRNA splicing factor. Acts by promoting exon inclusion via regulation of exon cassette splicing (By similarity). Also acts as a transcriptional coactivator for steroid nuclear receptors ESR1/ER-alpha and ESR2/ER-beta, and JUN/AP-1, independently of the pre-mRNA splicing factor activity (PubMed:11704680).</text>
</comment>
<comment type="subunit">
    <text evidence="1 4 5">Interacts with NCOA6 and JUN (PubMed:11704680). Interacts with ESR1 and ESR2, in the presence of estradiol (E2) (PubMed:11704680). Interacts with RSRC1 (via Arg/Ser-rich domain) (By similarity). Interacts with SF3B1 (By similarity). Interacts with ZNF106 (via N-terminus) (PubMed:27418600).</text>
</comment>
<comment type="subcellular location">
    <subcellularLocation>
        <location evidence="8">Nucleus</location>
    </subcellularLocation>
</comment>
<comment type="alternative products">
    <event type="alternative splicing"/>
    <isoform>
        <id>Q8VH51-1</id>
        <name>1</name>
        <name>HCC1.4</name>
        <sequence type="displayed"/>
    </isoform>
    <isoform>
        <id>Q8VH51-2</id>
        <name>2</name>
        <name>HCC1.3</name>
        <sequence type="described" ref="VSP_005822"/>
    </isoform>
    <isoform>
        <id>Q8VH51-3</id>
        <name>3</name>
        <sequence type="described" ref="VSP_005821 VSP_005822"/>
    </isoform>
    <text>Experimental confirmation may be lacking for some isoforms.</text>
</comment>
<comment type="similarity">
    <text evidence="8">Belongs to the splicing factor SR family.</text>
</comment>
<gene>
    <name type="primary">Rbm39</name>
    <name evidence="6" type="synonym">Caper</name>
    <name type="synonym">Rnpc2</name>
</gene>
<organism>
    <name type="scientific">Mus musculus</name>
    <name type="common">Mouse</name>
    <dbReference type="NCBI Taxonomy" id="10090"/>
    <lineage>
        <taxon>Eukaryota</taxon>
        <taxon>Metazoa</taxon>
        <taxon>Chordata</taxon>
        <taxon>Craniata</taxon>
        <taxon>Vertebrata</taxon>
        <taxon>Euteleostomi</taxon>
        <taxon>Mammalia</taxon>
        <taxon>Eutheria</taxon>
        <taxon>Euarchontoglires</taxon>
        <taxon>Glires</taxon>
        <taxon>Rodentia</taxon>
        <taxon>Myomorpha</taxon>
        <taxon>Muroidea</taxon>
        <taxon>Muridae</taxon>
        <taxon>Murinae</taxon>
        <taxon>Mus</taxon>
        <taxon>Mus</taxon>
    </lineage>
</organism>
<feature type="initiator methionine" description="Removed" evidence="1">
    <location>
        <position position="1"/>
    </location>
</feature>
<feature type="chain" id="PRO_0000081815" description="RNA-binding protein 39">
    <location>
        <begin position="2"/>
        <end position="530"/>
    </location>
</feature>
<feature type="domain" description="RRM 1" evidence="2">
    <location>
        <begin position="153"/>
        <end position="230"/>
    </location>
</feature>
<feature type="domain" description="RRM 2" evidence="2">
    <location>
        <begin position="250"/>
        <end position="328"/>
    </location>
</feature>
<feature type="domain" description="RRM 3" evidence="2">
    <location>
        <begin position="445"/>
        <end position="508"/>
    </location>
</feature>
<feature type="region of interest" description="Disordered" evidence="3">
    <location>
        <begin position="1"/>
        <end position="146"/>
    </location>
</feature>
<feature type="region of interest" description="Interaction with JUN" evidence="4">
    <location>
        <begin position="291"/>
        <end position="406"/>
    </location>
</feature>
<feature type="region of interest" description="Activating domain">
    <location>
        <begin position="291"/>
        <end position="355"/>
    </location>
</feature>
<feature type="region of interest" description="Interaction with ESR1 and ESR2" evidence="4">
    <location>
        <begin position="355"/>
        <end position="406"/>
    </location>
</feature>
<feature type="region of interest" description="Interaction with NCOA6" evidence="4">
    <location>
        <begin position="406"/>
        <end position="530"/>
    </location>
</feature>
<feature type="compositionally biased region" description="Basic and acidic residues" evidence="3">
    <location>
        <begin position="14"/>
        <end position="32"/>
    </location>
</feature>
<feature type="compositionally biased region" description="Basic residues" evidence="3">
    <location>
        <begin position="33"/>
        <end position="56"/>
    </location>
</feature>
<feature type="compositionally biased region" description="Basic residues" evidence="3">
    <location>
        <begin position="64"/>
        <end position="95"/>
    </location>
</feature>
<feature type="compositionally biased region" description="Basic residues" evidence="3">
    <location>
        <begin position="119"/>
        <end position="130"/>
    </location>
</feature>
<feature type="compositionally biased region" description="Basic and acidic residues" evidence="3">
    <location>
        <begin position="131"/>
        <end position="146"/>
    </location>
</feature>
<feature type="modified residue" description="N-acetylalanine" evidence="1">
    <location>
        <position position="2"/>
    </location>
</feature>
<feature type="modified residue" description="Phosphotyrosine" evidence="1">
    <location>
        <position position="95"/>
    </location>
</feature>
<feature type="modified residue" description="Phosphoserine" evidence="1">
    <location>
        <position position="97"/>
    </location>
</feature>
<feature type="modified residue" description="Phosphoserine" evidence="1">
    <location>
        <position position="100"/>
    </location>
</feature>
<feature type="modified residue" description="Phosphoserine" evidence="12">
    <location>
        <position position="117"/>
    </location>
</feature>
<feature type="modified residue" description="Phosphoserine" evidence="1">
    <location>
        <position position="121"/>
    </location>
</feature>
<feature type="modified residue" description="Phosphoserine" evidence="9 10 11 12">
    <location>
        <position position="136"/>
    </location>
</feature>
<feature type="modified residue" description="Phosphothreonine" evidence="1">
    <location>
        <position position="146"/>
    </location>
</feature>
<feature type="modified residue" description="Phosphoserine" evidence="12">
    <location>
        <position position="334"/>
    </location>
</feature>
<feature type="modified residue" description="Phosphoserine" evidence="12">
    <location>
        <position position="337"/>
    </location>
</feature>
<feature type="modified residue" description="Phosphoserine" evidence="1">
    <location>
        <position position="341"/>
    </location>
</feature>
<feature type="cross-link" description="Glycyl lysine isopeptide (Lys-Gly) (interchain with G-Cter in SUMO2)" evidence="1">
    <location>
        <position position="111"/>
    </location>
</feature>
<feature type="cross-link" description="Glycyl lysine isopeptide (Lys-Gly) (interchain with G-Cter in SUMO2)" evidence="1">
    <location>
        <position position="119"/>
    </location>
</feature>
<feature type="cross-link" description="Glycyl lysine isopeptide (Lys-Gly) (interchain with G-Cter in SUMO2)" evidence="1">
    <location>
        <position position="244"/>
    </location>
</feature>
<feature type="splice variant" id="VSP_005821" description="In isoform 3." evidence="7">
    <location>
        <begin position="1"/>
        <end position="157"/>
    </location>
</feature>
<feature type="splice variant" id="VSP_005822" description="In isoform 2 and isoform 3." evidence="6 7">
    <location>
        <begin position="392"/>
        <end position="397"/>
    </location>
</feature>
<feature type="sequence conflict" description="In Ref. 1; AAL32373." evidence="8" ref="1">
    <original>K</original>
    <variation>R</variation>
    <location>
        <position position="194"/>
    </location>
</feature>
<feature type="sequence conflict" description="In Ref. 1; AAL32373." evidence="8" ref="1">
    <original>P</original>
    <variation>R</variation>
    <location>
        <position position="208"/>
    </location>
</feature>
<feature type="strand" evidence="14">
    <location>
        <begin position="424"/>
        <end position="431"/>
    </location>
</feature>
<feature type="turn" evidence="14">
    <location>
        <begin position="434"/>
        <end position="436"/>
    </location>
</feature>
<feature type="strand" evidence="13">
    <location>
        <begin position="439"/>
        <end position="441"/>
    </location>
</feature>
<feature type="helix" evidence="14">
    <location>
        <begin position="442"/>
        <end position="454"/>
    </location>
</feature>
<feature type="turn" evidence="14">
    <location>
        <begin position="455"/>
        <end position="458"/>
    </location>
</feature>
<feature type="strand" evidence="14">
    <location>
        <begin position="461"/>
        <end position="465"/>
    </location>
</feature>
<feature type="strand" evidence="14">
    <location>
        <begin position="474"/>
        <end position="477"/>
    </location>
</feature>
<feature type="helix" evidence="14">
    <location>
        <begin position="481"/>
        <end position="491"/>
    </location>
</feature>
<feature type="strand" evidence="14">
    <location>
        <begin position="502"/>
        <end position="506"/>
    </location>
</feature>
<feature type="helix" evidence="14">
    <location>
        <begin position="508"/>
        <end position="514"/>
    </location>
</feature>
<feature type="helix" evidence="14">
    <location>
        <begin position="516"/>
        <end position="518"/>
    </location>
</feature>
<keyword id="KW-0002">3D-structure</keyword>
<keyword id="KW-0007">Acetylation</keyword>
<keyword id="KW-0010">Activator</keyword>
<keyword id="KW-0025">Alternative splicing</keyword>
<keyword id="KW-1017">Isopeptide bond</keyword>
<keyword id="KW-0507">mRNA processing</keyword>
<keyword id="KW-0508">mRNA splicing</keyword>
<keyword id="KW-0539">Nucleus</keyword>
<keyword id="KW-0597">Phosphoprotein</keyword>
<keyword id="KW-1185">Reference proteome</keyword>
<keyword id="KW-0677">Repeat</keyword>
<keyword id="KW-0694">RNA-binding</keyword>
<keyword id="KW-0804">Transcription</keyword>
<keyword id="KW-0805">Transcription regulation</keyword>
<keyword id="KW-0832">Ubl conjugation</keyword>
<dbReference type="EMBL" id="AY061882">
    <property type="protein sequence ID" value="AAL32373.1"/>
    <property type="molecule type" value="mRNA"/>
</dbReference>
<dbReference type="EMBL" id="AK147076">
    <property type="protein sequence ID" value="BAE27657.1"/>
    <property type="molecule type" value="mRNA"/>
</dbReference>
<dbReference type="EMBL" id="AL929404">
    <property type="status" value="NOT_ANNOTATED_CDS"/>
    <property type="molecule type" value="Genomic_DNA"/>
</dbReference>
<dbReference type="EMBL" id="BX649640">
    <property type="status" value="NOT_ANNOTATED_CDS"/>
    <property type="molecule type" value="Genomic_DNA"/>
</dbReference>
<dbReference type="EMBL" id="CH466551">
    <property type="protein sequence ID" value="EDL06184.1"/>
    <property type="molecule type" value="Genomic_DNA"/>
</dbReference>
<dbReference type="EMBL" id="BC004000">
    <property type="protein sequence ID" value="AAH04000.1"/>
    <property type="molecule type" value="mRNA"/>
</dbReference>
<dbReference type="EMBL" id="BC030493">
    <property type="protein sequence ID" value="AAH30493.1"/>
    <property type="molecule type" value="mRNA"/>
</dbReference>
<dbReference type="EMBL" id="BC086645">
    <property type="protein sequence ID" value="AAH86645.1"/>
    <property type="molecule type" value="mRNA"/>
</dbReference>
<dbReference type="CCDS" id="CCDS16964.1">
    <molecule id="Q8VH51-1"/>
</dbReference>
<dbReference type="CCDS" id="CCDS71168.1">
    <molecule id="Q8VH51-2"/>
</dbReference>
<dbReference type="RefSeq" id="NP_001278043.1">
    <molecule id="Q8VH51-2"/>
    <property type="nucleotide sequence ID" value="NM_001291114.1"/>
</dbReference>
<dbReference type="RefSeq" id="NP_001278044.1">
    <molecule id="Q8VH51-2"/>
    <property type="nucleotide sequence ID" value="NM_001291115.1"/>
</dbReference>
<dbReference type="RefSeq" id="NP_001349698.1">
    <molecule id="Q8VH51-3"/>
    <property type="nucleotide sequence ID" value="NM_001362769.1"/>
</dbReference>
<dbReference type="RefSeq" id="NP_573505.2">
    <molecule id="Q8VH51-1"/>
    <property type="nucleotide sequence ID" value="NM_133242.3"/>
</dbReference>
<dbReference type="RefSeq" id="XP_011237628.1">
    <property type="nucleotide sequence ID" value="XM_011239326.2"/>
</dbReference>
<dbReference type="RefSeq" id="XP_011237629.1">
    <molecule id="Q8VH51-3"/>
    <property type="nucleotide sequence ID" value="XM_011239327.4"/>
</dbReference>
<dbReference type="RefSeq" id="XP_017171483.1">
    <molecule id="Q8VH51-3"/>
    <property type="nucleotide sequence ID" value="XM_017315994.3"/>
</dbReference>
<dbReference type="RefSeq" id="XP_017171487.1">
    <property type="nucleotide sequence ID" value="XM_017315998.1"/>
</dbReference>
<dbReference type="RefSeq" id="XP_017171494.1">
    <molecule id="Q8VH51-3"/>
    <property type="nucleotide sequence ID" value="XM_017316005.3"/>
</dbReference>
<dbReference type="RefSeq" id="XP_017171497.1">
    <property type="nucleotide sequence ID" value="XM_017316008.1"/>
</dbReference>
<dbReference type="RefSeq" id="XP_030103871.1">
    <molecule id="Q8VH51-3"/>
    <property type="nucleotide sequence ID" value="XM_030248011.2"/>
</dbReference>
<dbReference type="RefSeq" id="XP_030103877.1">
    <molecule id="Q8VH51-3"/>
    <property type="nucleotide sequence ID" value="XM_030248017.2"/>
</dbReference>
<dbReference type="RefSeq" id="XP_030103880.1">
    <molecule id="Q8VH51-3"/>
    <property type="nucleotide sequence ID" value="XM_030248020.2"/>
</dbReference>
<dbReference type="RefSeq" id="XP_030103881.1">
    <molecule id="Q8VH51-3"/>
    <property type="nucleotide sequence ID" value="XM_030248021.2"/>
</dbReference>
<dbReference type="RefSeq" id="XP_030103888.1">
    <molecule id="Q8VH51-3"/>
    <property type="nucleotide sequence ID" value="XM_030248028.2"/>
</dbReference>
<dbReference type="RefSeq" id="XP_030103891.1">
    <molecule id="Q8VH51-3"/>
    <property type="nucleotide sequence ID" value="XM_030248031.2"/>
</dbReference>
<dbReference type="RefSeq" id="XP_036014881.1">
    <molecule id="Q8VH51-3"/>
    <property type="nucleotide sequence ID" value="XM_036158988.1"/>
</dbReference>
<dbReference type="RefSeq" id="XP_036014882.1">
    <molecule id="Q8VH51-3"/>
    <property type="nucleotide sequence ID" value="XM_036158989.1"/>
</dbReference>
<dbReference type="RefSeq" id="XP_036014883.1">
    <molecule id="Q8VH51-3"/>
    <property type="nucleotide sequence ID" value="XM_036158990.1"/>
</dbReference>
<dbReference type="RefSeq" id="XP_036014884.1">
    <molecule id="Q8VH51-3"/>
    <property type="nucleotide sequence ID" value="XM_036158991.1"/>
</dbReference>
<dbReference type="PDB" id="2LQ5">
    <property type="method" value="NMR"/>
    <property type="chains" value="A=418-530"/>
</dbReference>
<dbReference type="PDB" id="3S6E">
    <property type="method" value="X-ray"/>
    <property type="resolution" value="0.95 A"/>
    <property type="chains" value="A/B=418-530"/>
</dbReference>
<dbReference type="PDB" id="4J5O">
    <property type="method" value="X-ray"/>
    <property type="resolution" value="1.11 A"/>
    <property type="chains" value="A/B=418-530"/>
</dbReference>
<dbReference type="PDB" id="4RU2">
    <property type="method" value="X-ray"/>
    <property type="resolution" value="2.20 A"/>
    <property type="chains" value="A/C/E/G/I/K/M/O/Q=418-530"/>
</dbReference>
<dbReference type="PDB" id="5CXT">
    <property type="method" value="X-ray"/>
    <property type="resolution" value="2.20 A"/>
    <property type="chains" value="A/C/E/G/I/K/M/O/Q=418-530"/>
</dbReference>
<dbReference type="PDBsum" id="2LQ5"/>
<dbReference type="PDBsum" id="3S6E"/>
<dbReference type="PDBsum" id="4J5O"/>
<dbReference type="PDBsum" id="4RU2"/>
<dbReference type="PDBsum" id="5CXT"/>
<dbReference type="BMRB" id="Q8VH51"/>
<dbReference type="SMR" id="Q8VH51"/>
<dbReference type="BioGRID" id="228442">
    <property type="interactions" value="38"/>
</dbReference>
<dbReference type="CORUM" id="Q8VH51"/>
<dbReference type="FunCoup" id="Q8VH51">
    <property type="interactions" value="4320"/>
</dbReference>
<dbReference type="IntAct" id="Q8VH51">
    <property type="interactions" value="10"/>
</dbReference>
<dbReference type="MINT" id="Q8VH51"/>
<dbReference type="STRING" id="10090.ENSMUSP00000105216"/>
<dbReference type="GlyGen" id="Q8VH51">
    <property type="glycosylation" value="1 site, 1 O-linked glycan (1 site)"/>
</dbReference>
<dbReference type="iPTMnet" id="Q8VH51"/>
<dbReference type="PhosphoSitePlus" id="Q8VH51"/>
<dbReference type="SwissPalm" id="Q8VH51"/>
<dbReference type="jPOST" id="Q8VH51"/>
<dbReference type="PaxDb" id="10090-ENSMUSP00000105216"/>
<dbReference type="PeptideAtlas" id="Q8VH51"/>
<dbReference type="ProteomicsDB" id="255129">
    <molecule id="Q8VH51-1"/>
</dbReference>
<dbReference type="ProteomicsDB" id="255130">
    <molecule id="Q8VH51-2"/>
</dbReference>
<dbReference type="ProteomicsDB" id="255131">
    <molecule id="Q8VH51-3"/>
</dbReference>
<dbReference type="Pumba" id="Q8VH51"/>
<dbReference type="Antibodypedia" id="459">
    <property type="antibodies" value="241 antibodies from 28 providers"/>
</dbReference>
<dbReference type="DNASU" id="170791"/>
<dbReference type="Ensembl" id="ENSMUST00000029149.13">
    <molecule id="Q8VH51-2"/>
    <property type="protein sequence ID" value="ENSMUSP00000029149.7"/>
    <property type="gene ID" value="ENSMUSG00000027620.17"/>
</dbReference>
<dbReference type="Ensembl" id="ENSMUST00000109587.9">
    <molecule id="Q8VH51-1"/>
    <property type="protein sequence ID" value="ENSMUSP00000105216.3"/>
    <property type="gene ID" value="ENSMUSG00000027620.17"/>
</dbReference>
<dbReference type="Ensembl" id="ENSMUST00000146297.8">
    <molecule id="Q8VH51-2"/>
    <property type="protein sequence ID" value="ENSMUSP00000119298.2"/>
    <property type="gene ID" value="ENSMUSG00000027620.17"/>
</dbReference>
<dbReference type="GeneID" id="170791"/>
<dbReference type="KEGG" id="mmu:170791"/>
<dbReference type="UCSC" id="uc008nmr.3">
    <molecule id="Q8VH51-1"/>
    <property type="organism name" value="mouse"/>
</dbReference>
<dbReference type="AGR" id="MGI:2157953"/>
<dbReference type="CTD" id="9584"/>
<dbReference type="MGI" id="MGI:2157953">
    <property type="gene designation" value="Rbm39"/>
</dbReference>
<dbReference type="VEuPathDB" id="HostDB:ENSMUSG00000027620"/>
<dbReference type="eggNOG" id="KOG0147">
    <property type="taxonomic scope" value="Eukaryota"/>
</dbReference>
<dbReference type="GeneTree" id="ENSGT00940000154468"/>
<dbReference type="InParanoid" id="Q8VH51"/>
<dbReference type="OMA" id="GRDNDKG"/>
<dbReference type="OrthoDB" id="8123449at2759"/>
<dbReference type="PhylomeDB" id="Q8VH51"/>
<dbReference type="TreeFam" id="TF320448"/>
<dbReference type="Reactome" id="R-MMU-2980766">
    <property type="pathway name" value="Nuclear Envelope Breakdown"/>
</dbReference>
<dbReference type="Reactome" id="R-MMU-2995383">
    <property type="pathway name" value="Initiation of Nuclear Envelope (NE) Reformation"/>
</dbReference>
<dbReference type="Reactome" id="R-MMU-4419969">
    <property type="pathway name" value="Depolymerization of the Nuclear Lamina"/>
</dbReference>
<dbReference type="Reactome" id="R-MMU-72163">
    <property type="pathway name" value="mRNA Splicing - Major Pathway"/>
</dbReference>
<dbReference type="Reactome" id="R-MMU-9013149">
    <property type="pathway name" value="RAC1 GTPase cycle"/>
</dbReference>
<dbReference type="Reactome" id="R-MMU-9013404">
    <property type="pathway name" value="RAC2 GTPase cycle"/>
</dbReference>
<dbReference type="Reactome" id="R-MMU-9013405">
    <property type="pathway name" value="RHOD GTPase cycle"/>
</dbReference>
<dbReference type="Reactome" id="R-MMU-9013408">
    <property type="pathway name" value="RHOG GTPase cycle"/>
</dbReference>
<dbReference type="Reactome" id="R-MMU-9013423">
    <property type="pathway name" value="RAC3 GTPase cycle"/>
</dbReference>
<dbReference type="Reactome" id="R-MMU-9696264">
    <property type="pathway name" value="RND3 GTPase cycle"/>
</dbReference>
<dbReference type="Reactome" id="R-MMU-9696270">
    <property type="pathway name" value="RND2 GTPase cycle"/>
</dbReference>
<dbReference type="Reactome" id="R-MMU-9696273">
    <property type="pathway name" value="RND1 GTPase cycle"/>
</dbReference>
<dbReference type="BioGRID-ORCS" id="170791">
    <property type="hits" value="21 hits in 79 CRISPR screens"/>
</dbReference>
<dbReference type="ChiTaRS" id="Rbm39">
    <property type="organism name" value="mouse"/>
</dbReference>
<dbReference type="EvolutionaryTrace" id="Q8VH51"/>
<dbReference type="PRO" id="PR:Q8VH51"/>
<dbReference type="Proteomes" id="UP000000589">
    <property type="component" value="Chromosome 2"/>
</dbReference>
<dbReference type="RNAct" id="Q8VH51">
    <property type="molecule type" value="protein"/>
</dbReference>
<dbReference type="Bgee" id="ENSMUSG00000027620">
    <property type="expression patterns" value="Expressed in metanephric cortical collecting duct and 271 other cell types or tissues"/>
</dbReference>
<dbReference type="ExpressionAtlas" id="Q8VH51">
    <property type="expression patterns" value="baseline and differential"/>
</dbReference>
<dbReference type="GO" id="GO:0034451">
    <property type="term" value="C:centriolar satellite"/>
    <property type="evidence" value="ECO:0007669"/>
    <property type="project" value="Ensembl"/>
</dbReference>
<dbReference type="GO" id="GO:0016607">
    <property type="term" value="C:nuclear speck"/>
    <property type="evidence" value="ECO:0007669"/>
    <property type="project" value="Ensembl"/>
</dbReference>
<dbReference type="GO" id="GO:0032991">
    <property type="term" value="C:protein-containing complex"/>
    <property type="evidence" value="ECO:0007669"/>
    <property type="project" value="Ensembl"/>
</dbReference>
<dbReference type="GO" id="GO:0003723">
    <property type="term" value="F:RNA binding"/>
    <property type="evidence" value="ECO:0007669"/>
    <property type="project" value="UniProtKB-KW"/>
</dbReference>
<dbReference type="GO" id="GO:0050733">
    <property type="term" value="F:RS domain binding"/>
    <property type="evidence" value="ECO:0000353"/>
    <property type="project" value="MGI"/>
</dbReference>
<dbReference type="GO" id="GO:0003713">
    <property type="term" value="F:transcription coactivator activity"/>
    <property type="evidence" value="ECO:0000314"/>
    <property type="project" value="MGI"/>
</dbReference>
<dbReference type="GO" id="GO:0006397">
    <property type="term" value="P:mRNA processing"/>
    <property type="evidence" value="ECO:0007669"/>
    <property type="project" value="UniProtKB-KW"/>
</dbReference>
<dbReference type="GO" id="GO:0048024">
    <property type="term" value="P:regulation of mRNA splicing, via spliceosome"/>
    <property type="evidence" value="ECO:0000250"/>
    <property type="project" value="UniProtKB"/>
</dbReference>
<dbReference type="GO" id="GO:0006357">
    <property type="term" value="P:regulation of transcription by RNA polymerase II"/>
    <property type="evidence" value="ECO:0000314"/>
    <property type="project" value="MGI"/>
</dbReference>
<dbReference type="GO" id="GO:0008380">
    <property type="term" value="P:RNA splicing"/>
    <property type="evidence" value="ECO:0007669"/>
    <property type="project" value="UniProtKB-KW"/>
</dbReference>
<dbReference type="CDD" id="cd12537">
    <property type="entry name" value="RRM1_RBM23"/>
    <property type="match status" value="1"/>
</dbReference>
<dbReference type="CDD" id="cd12284">
    <property type="entry name" value="RRM2_RBM23_RBM39"/>
    <property type="match status" value="1"/>
</dbReference>
<dbReference type="CDD" id="cd12285">
    <property type="entry name" value="RRM3_RBM39_like"/>
    <property type="match status" value="1"/>
</dbReference>
<dbReference type="FunFam" id="3.30.70.330:FF:000080">
    <property type="entry name" value="RNA-binding protein 39 isoform X1"/>
    <property type="match status" value="1"/>
</dbReference>
<dbReference type="FunFam" id="3.30.70.330:FF:000090">
    <property type="entry name" value="RNA-binding protein 39 isoform X1"/>
    <property type="match status" value="1"/>
</dbReference>
<dbReference type="FunFam" id="3.30.70.330:FF:000373">
    <property type="entry name" value="RNA-binding protein 39 isoform X4"/>
    <property type="match status" value="1"/>
</dbReference>
<dbReference type="Gene3D" id="3.30.70.330">
    <property type="match status" value="3"/>
</dbReference>
<dbReference type="InterPro" id="IPR012677">
    <property type="entry name" value="Nucleotide-bd_a/b_plait_sf"/>
</dbReference>
<dbReference type="InterPro" id="IPR035979">
    <property type="entry name" value="RBD_domain_sf"/>
</dbReference>
<dbReference type="InterPro" id="IPR029123">
    <property type="entry name" value="RBM39_linker"/>
</dbReference>
<dbReference type="InterPro" id="IPR006509">
    <property type="entry name" value="RBM39_SF"/>
</dbReference>
<dbReference type="InterPro" id="IPR000504">
    <property type="entry name" value="RRM_dom"/>
</dbReference>
<dbReference type="InterPro" id="IPR003954">
    <property type="entry name" value="RRM_dom_euk"/>
</dbReference>
<dbReference type="NCBIfam" id="TIGR01622">
    <property type="entry name" value="SF-CC1"/>
    <property type="match status" value="1"/>
</dbReference>
<dbReference type="PANTHER" id="PTHR48036">
    <property type="entry name" value="SPLICING FACTOR (PAD-1), PUTATIVE (AFU_ORTHOLOGUE AFUA_1G15810)-RELATED"/>
    <property type="match status" value="1"/>
</dbReference>
<dbReference type="Pfam" id="PF15519">
    <property type="entry name" value="RBM39linker"/>
    <property type="match status" value="1"/>
</dbReference>
<dbReference type="Pfam" id="PF00076">
    <property type="entry name" value="RRM_1"/>
    <property type="match status" value="2"/>
</dbReference>
<dbReference type="SMART" id="SM00360">
    <property type="entry name" value="RRM"/>
    <property type="match status" value="3"/>
</dbReference>
<dbReference type="SMART" id="SM00361">
    <property type="entry name" value="RRM_1"/>
    <property type="match status" value="2"/>
</dbReference>
<dbReference type="SUPFAM" id="SSF54928">
    <property type="entry name" value="RNA-binding domain, RBD"/>
    <property type="match status" value="2"/>
</dbReference>
<dbReference type="PROSITE" id="PS50102">
    <property type="entry name" value="RRM"/>
    <property type="match status" value="2"/>
</dbReference>
<evidence type="ECO:0000250" key="1">
    <source>
        <dbReference type="UniProtKB" id="Q14498"/>
    </source>
</evidence>
<evidence type="ECO:0000255" key="2">
    <source>
        <dbReference type="PROSITE-ProRule" id="PRU00176"/>
    </source>
</evidence>
<evidence type="ECO:0000256" key="3">
    <source>
        <dbReference type="SAM" id="MobiDB-lite"/>
    </source>
</evidence>
<evidence type="ECO:0000269" key="4">
    <source>
    </source>
</evidence>
<evidence type="ECO:0000269" key="5">
    <source>
    </source>
</evidence>
<evidence type="ECO:0000303" key="6">
    <source>
    </source>
</evidence>
<evidence type="ECO:0000303" key="7">
    <source>
    </source>
</evidence>
<evidence type="ECO:0000305" key="8"/>
<evidence type="ECO:0007744" key="9">
    <source>
    </source>
</evidence>
<evidence type="ECO:0007744" key="10">
    <source>
    </source>
</evidence>
<evidence type="ECO:0007744" key="11">
    <source>
    </source>
</evidence>
<evidence type="ECO:0007744" key="12">
    <source>
    </source>
</evidence>
<evidence type="ECO:0007829" key="13">
    <source>
        <dbReference type="PDB" id="2LQ5"/>
    </source>
</evidence>
<evidence type="ECO:0007829" key="14">
    <source>
        <dbReference type="PDB" id="3S6E"/>
    </source>
</evidence>
<proteinExistence type="evidence at protein level"/>
<sequence>MADDIDIEAMLEAPYKKDENKLNSANGHEERSKKRKKSKSRSRSHERKRSKSKERKRSRDRERKKSKSRERKRSRSKERRRSRSRSRDRRFRGRYRSPYSGPKFNSAIRGKIGLPHSIKLSRRRSRSKSPFRKDKSPVREPIDNLTPEERDARTVFCMQLAARIRPRDLEEFFSTVGKVRDVRMISDRNSRRSKGIAYVEFVDVSSVPLAIGLTGQRVLGVPIIVQASQAEKNRAAAMANNLQKGSAGPMRLYVGSLHFNITEDMLRGIFEPFGRIESIQLMMDSETGRSKGYGFITFSDSECAKKALEQLNGFELAGRPMKVGHVTERTDASSASSFLDSDELERTGIDLGTTGRLQLMARLAEGTGLQIPPAAQQALQMSGSLAFGAVAEFSFVIDLQTRLSQQTEASALAAAASVQPLATQCFQLSNMFNPQTEEEVGWDTEIKDDVIEECNKHGGVIHIYVDKNSAQGNVYVKCPSIAAAIAAVNALHGRWFAGKMITAAYVPLPTYHNLFPDSMTATQLLVPSRR</sequence>
<protein>
    <recommendedName>
        <fullName>RNA-binding protein 39</fullName>
    </recommendedName>
    <alternativeName>
        <fullName evidence="6">Coactivator of activating protein 1 and estrogen receptors</fullName>
        <shortName evidence="6">Coactivator of AP-1 and ERs</shortName>
    </alternativeName>
    <alternativeName>
        <fullName>RNA-binding motif protein 39</fullName>
    </alternativeName>
    <alternativeName>
        <fullName>RNA-binding region-containing protein 2</fullName>
    </alternativeName>
</protein>
<name>RBM39_MOUSE</name>